<accession>B9L6M0</accession>
<keyword id="KW-0479">Metal-binding</keyword>
<keyword id="KW-0687">Ribonucleoprotein</keyword>
<keyword id="KW-0689">Ribosomal protein</keyword>
<keyword id="KW-0694">RNA-binding</keyword>
<keyword id="KW-0699">rRNA-binding</keyword>
<keyword id="KW-0862">Zinc</keyword>
<comment type="function">
    <text evidence="1">Binds 16S rRNA, required for the assembly of 30S particles and may also be responsible for determining the conformation of the 16S rRNA at the A site.</text>
</comment>
<comment type="cofactor">
    <cofactor evidence="1">
        <name>Zn(2+)</name>
        <dbReference type="ChEBI" id="CHEBI:29105"/>
    </cofactor>
    <text evidence="1">Binds 1 zinc ion per subunit.</text>
</comment>
<comment type="subunit">
    <text evidence="1">Part of the 30S ribosomal subunit. Contacts proteins S3 and S10.</text>
</comment>
<comment type="similarity">
    <text evidence="1">Belongs to the universal ribosomal protein uS14 family. Zinc-binding uS14 subfamily.</text>
</comment>
<proteinExistence type="inferred from homology"/>
<reference key="1">
    <citation type="journal article" date="2009" name="PLoS Genet.">
        <title>Adaptations to submarine hydrothermal environments exemplified by the genome of Nautilia profundicola.</title>
        <authorList>
            <person name="Campbell B.J."/>
            <person name="Smith J.L."/>
            <person name="Hanson T.E."/>
            <person name="Klotz M.G."/>
            <person name="Stein L.Y."/>
            <person name="Lee C.K."/>
            <person name="Wu D."/>
            <person name="Robinson J.M."/>
            <person name="Khouri H.M."/>
            <person name="Eisen J.A."/>
            <person name="Cary S.C."/>
        </authorList>
    </citation>
    <scope>NUCLEOTIDE SEQUENCE [LARGE SCALE GENOMIC DNA]</scope>
    <source>
        <strain>ATCC BAA-1463 / DSM 18972 / AmH</strain>
    </source>
</reference>
<sequence>MAKKSMIAKAKRKPKFKVRAYTRCSICGRVHSVYRDFGICRICLRKMANEGLLPGVKKASW</sequence>
<name>RS14Z_NAUPA</name>
<protein>
    <recommendedName>
        <fullName evidence="1">Small ribosomal subunit protein uS14</fullName>
    </recommendedName>
    <alternativeName>
        <fullName evidence="2">30S ribosomal protein S14 type Z</fullName>
    </alternativeName>
</protein>
<dbReference type="EMBL" id="CP001279">
    <property type="protein sequence ID" value="ACM92359.1"/>
    <property type="molecule type" value="Genomic_DNA"/>
</dbReference>
<dbReference type="RefSeq" id="WP_007475795.1">
    <property type="nucleotide sequence ID" value="NC_012115.1"/>
</dbReference>
<dbReference type="SMR" id="B9L6M0"/>
<dbReference type="STRING" id="598659.NAMH_1628"/>
<dbReference type="KEGG" id="nam:NAMH_1628"/>
<dbReference type="eggNOG" id="COG0199">
    <property type="taxonomic scope" value="Bacteria"/>
</dbReference>
<dbReference type="HOGENOM" id="CLU_139869_3_0_7"/>
<dbReference type="OrthoDB" id="9810484at2"/>
<dbReference type="Proteomes" id="UP000000448">
    <property type="component" value="Chromosome"/>
</dbReference>
<dbReference type="GO" id="GO:0005737">
    <property type="term" value="C:cytoplasm"/>
    <property type="evidence" value="ECO:0007669"/>
    <property type="project" value="UniProtKB-ARBA"/>
</dbReference>
<dbReference type="GO" id="GO:0015935">
    <property type="term" value="C:small ribosomal subunit"/>
    <property type="evidence" value="ECO:0007669"/>
    <property type="project" value="TreeGrafter"/>
</dbReference>
<dbReference type="GO" id="GO:0019843">
    <property type="term" value="F:rRNA binding"/>
    <property type="evidence" value="ECO:0007669"/>
    <property type="project" value="UniProtKB-UniRule"/>
</dbReference>
<dbReference type="GO" id="GO:0003735">
    <property type="term" value="F:structural constituent of ribosome"/>
    <property type="evidence" value="ECO:0007669"/>
    <property type="project" value="InterPro"/>
</dbReference>
<dbReference type="GO" id="GO:0008270">
    <property type="term" value="F:zinc ion binding"/>
    <property type="evidence" value="ECO:0007669"/>
    <property type="project" value="UniProtKB-UniRule"/>
</dbReference>
<dbReference type="GO" id="GO:0006412">
    <property type="term" value="P:translation"/>
    <property type="evidence" value="ECO:0007669"/>
    <property type="project" value="UniProtKB-UniRule"/>
</dbReference>
<dbReference type="FunFam" id="4.10.830.10:FF:000001">
    <property type="entry name" value="30S ribosomal protein S14 type Z"/>
    <property type="match status" value="1"/>
</dbReference>
<dbReference type="Gene3D" id="4.10.830.10">
    <property type="entry name" value="30s Ribosomal Protein S14, Chain N"/>
    <property type="match status" value="1"/>
</dbReference>
<dbReference type="HAMAP" id="MF_01364_B">
    <property type="entry name" value="Ribosomal_uS14_2_B"/>
    <property type="match status" value="1"/>
</dbReference>
<dbReference type="InterPro" id="IPR001209">
    <property type="entry name" value="Ribosomal_uS14"/>
</dbReference>
<dbReference type="InterPro" id="IPR023053">
    <property type="entry name" value="Ribosomal_uS14_bact"/>
</dbReference>
<dbReference type="InterPro" id="IPR018271">
    <property type="entry name" value="Ribosomal_uS14_CS"/>
</dbReference>
<dbReference type="InterPro" id="IPR043140">
    <property type="entry name" value="Ribosomal_uS14_sf"/>
</dbReference>
<dbReference type="NCBIfam" id="NF005974">
    <property type="entry name" value="PRK08061.1"/>
    <property type="match status" value="1"/>
</dbReference>
<dbReference type="PANTHER" id="PTHR19836">
    <property type="entry name" value="30S RIBOSOMAL PROTEIN S14"/>
    <property type="match status" value="1"/>
</dbReference>
<dbReference type="PANTHER" id="PTHR19836:SF19">
    <property type="entry name" value="SMALL RIBOSOMAL SUBUNIT PROTEIN US14M"/>
    <property type="match status" value="1"/>
</dbReference>
<dbReference type="Pfam" id="PF00253">
    <property type="entry name" value="Ribosomal_S14"/>
    <property type="match status" value="1"/>
</dbReference>
<dbReference type="SUPFAM" id="SSF57716">
    <property type="entry name" value="Glucocorticoid receptor-like (DNA-binding domain)"/>
    <property type="match status" value="1"/>
</dbReference>
<dbReference type="PROSITE" id="PS00527">
    <property type="entry name" value="RIBOSOMAL_S14"/>
    <property type="match status" value="1"/>
</dbReference>
<gene>
    <name evidence="1" type="primary">rpsZ</name>
    <name evidence="1" type="synonym">rpsN</name>
    <name type="ordered locus">NAMH_1628</name>
</gene>
<feature type="chain" id="PRO_1000166776" description="Small ribosomal subunit protein uS14">
    <location>
        <begin position="1"/>
        <end position="61"/>
    </location>
</feature>
<feature type="binding site" evidence="1">
    <location>
        <position position="24"/>
    </location>
    <ligand>
        <name>Zn(2+)</name>
        <dbReference type="ChEBI" id="CHEBI:29105"/>
    </ligand>
</feature>
<feature type="binding site" evidence="1">
    <location>
        <position position="27"/>
    </location>
    <ligand>
        <name>Zn(2+)</name>
        <dbReference type="ChEBI" id="CHEBI:29105"/>
    </ligand>
</feature>
<feature type="binding site" evidence="1">
    <location>
        <position position="40"/>
    </location>
    <ligand>
        <name>Zn(2+)</name>
        <dbReference type="ChEBI" id="CHEBI:29105"/>
    </ligand>
</feature>
<feature type="binding site" evidence="1">
    <location>
        <position position="43"/>
    </location>
    <ligand>
        <name>Zn(2+)</name>
        <dbReference type="ChEBI" id="CHEBI:29105"/>
    </ligand>
</feature>
<evidence type="ECO:0000255" key="1">
    <source>
        <dbReference type="HAMAP-Rule" id="MF_01364"/>
    </source>
</evidence>
<evidence type="ECO:0000305" key="2"/>
<organism>
    <name type="scientific">Nautilia profundicola (strain ATCC BAA-1463 / DSM 18972 / AmH)</name>
    <dbReference type="NCBI Taxonomy" id="598659"/>
    <lineage>
        <taxon>Bacteria</taxon>
        <taxon>Pseudomonadati</taxon>
        <taxon>Campylobacterota</taxon>
        <taxon>Epsilonproteobacteria</taxon>
        <taxon>Nautiliales</taxon>
        <taxon>Nautiliaceae</taxon>
        <taxon>Nautilia</taxon>
    </lineage>
</organism>